<reference key="1">
    <citation type="journal article" date="2008" name="J. Bacteriol.">
        <title>Complete genome sequence of uropathogenic Proteus mirabilis, a master of both adherence and motility.</title>
        <authorList>
            <person name="Pearson M.M."/>
            <person name="Sebaihia M."/>
            <person name="Churcher C."/>
            <person name="Quail M.A."/>
            <person name="Seshasayee A.S."/>
            <person name="Luscombe N.M."/>
            <person name="Abdellah Z."/>
            <person name="Arrosmith C."/>
            <person name="Atkin B."/>
            <person name="Chillingworth T."/>
            <person name="Hauser H."/>
            <person name="Jagels K."/>
            <person name="Moule S."/>
            <person name="Mungall K."/>
            <person name="Norbertczak H."/>
            <person name="Rabbinowitsch E."/>
            <person name="Walker D."/>
            <person name="Whithead S."/>
            <person name="Thomson N.R."/>
            <person name="Rather P.N."/>
            <person name="Parkhill J."/>
            <person name="Mobley H.L.T."/>
        </authorList>
    </citation>
    <scope>NUCLEOTIDE SEQUENCE [LARGE SCALE GENOMIC DNA]</scope>
    <source>
        <strain>HI4320</strain>
    </source>
</reference>
<evidence type="ECO:0000255" key="1">
    <source>
        <dbReference type="HAMAP-Rule" id="MF_00539"/>
    </source>
</evidence>
<evidence type="ECO:0000256" key="2">
    <source>
        <dbReference type="SAM" id="MobiDB-lite"/>
    </source>
</evidence>
<evidence type="ECO:0000305" key="3"/>
<sequence>MAHKKAGGSTRNGRDSEAKRLGVKRFGGEAVLAGSIIVRQRGTKFHAGTNVGCGRDHTLFALADGKVKFEVKGPNNRKFISIEAE</sequence>
<feature type="chain" id="PRO_1000128792" description="Large ribosomal subunit protein bL27">
    <location>
        <begin position="1"/>
        <end position="85"/>
    </location>
</feature>
<feature type="region of interest" description="Disordered" evidence="2">
    <location>
        <begin position="1"/>
        <end position="20"/>
    </location>
</feature>
<keyword id="KW-1185">Reference proteome</keyword>
<keyword id="KW-0687">Ribonucleoprotein</keyword>
<keyword id="KW-0689">Ribosomal protein</keyword>
<proteinExistence type="inferred from homology"/>
<name>RL27_PROMH</name>
<gene>
    <name evidence="1" type="primary">rpmA</name>
    <name type="ordered locus">PMI3406</name>
</gene>
<comment type="similarity">
    <text evidence="1">Belongs to the bacterial ribosomal protein bL27 family.</text>
</comment>
<dbReference type="EMBL" id="AM942759">
    <property type="protein sequence ID" value="CAR46675.1"/>
    <property type="molecule type" value="Genomic_DNA"/>
</dbReference>
<dbReference type="RefSeq" id="WP_004246250.1">
    <property type="nucleotide sequence ID" value="NC_010554.1"/>
</dbReference>
<dbReference type="SMR" id="B4F2A7"/>
<dbReference type="EnsemblBacteria" id="CAR46675">
    <property type="protein sequence ID" value="CAR46675"/>
    <property type="gene ID" value="PMI3406"/>
</dbReference>
<dbReference type="GeneID" id="6800582"/>
<dbReference type="KEGG" id="pmr:PMI3406"/>
<dbReference type="eggNOG" id="COG0211">
    <property type="taxonomic scope" value="Bacteria"/>
</dbReference>
<dbReference type="HOGENOM" id="CLU_095424_4_1_6"/>
<dbReference type="Proteomes" id="UP000008319">
    <property type="component" value="Chromosome"/>
</dbReference>
<dbReference type="GO" id="GO:0022625">
    <property type="term" value="C:cytosolic large ribosomal subunit"/>
    <property type="evidence" value="ECO:0007669"/>
    <property type="project" value="TreeGrafter"/>
</dbReference>
<dbReference type="GO" id="GO:0003735">
    <property type="term" value="F:structural constituent of ribosome"/>
    <property type="evidence" value="ECO:0007669"/>
    <property type="project" value="InterPro"/>
</dbReference>
<dbReference type="GO" id="GO:0006412">
    <property type="term" value="P:translation"/>
    <property type="evidence" value="ECO:0007669"/>
    <property type="project" value="UniProtKB-UniRule"/>
</dbReference>
<dbReference type="FunFam" id="2.40.50.100:FF:000001">
    <property type="entry name" value="50S ribosomal protein L27"/>
    <property type="match status" value="1"/>
</dbReference>
<dbReference type="Gene3D" id="2.40.50.100">
    <property type="match status" value="1"/>
</dbReference>
<dbReference type="HAMAP" id="MF_00539">
    <property type="entry name" value="Ribosomal_bL27"/>
    <property type="match status" value="1"/>
</dbReference>
<dbReference type="InterPro" id="IPR001684">
    <property type="entry name" value="Ribosomal_bL27"/>
</dbReference>
<dbReference type="InterPro" id="IPR018261">
    <property type="entry name" value="Ribosomal_bL27_CS"/>
</dbReference>
<dbReference type="NCBIfam" id="TIGR00062">
    <property type="entry name" value="L27"/>
    <property type="match status" value="1"/>
</dbReference>
<dbReference type="PANTHER" id="PTHR15893:SF0">
    <property type="entry name" value="LARGE RIBOSOMAL SUBUNIT PROTEIN BL27M"/>
    <property type="match status" value="1"/>
</dbReference>
<dbReference type="PANTHER" id="PTHR15893">
    <property type="entry name" value="RIBOSOMAL PROTEIN L27"/>
    <property type="match status" value="1"/>
</dbReference>
<dbReference type="Pfam" id="PF01016">
    <property type="entry name" value="Ribosomal_L27"/>
    <property type="match status" value="1"/>
</dbReference>
<dbReference type="PRINTS" id="PR00063">
    <property type="entry name" value="RIBOSOMALL27"/>
</dbReference>
<dbReference type="SUPFAM" id="SSF110324">
    <property type="entry name" value="Ribosomal L27 protein-like"/>
    <property type="match status" value="1"/>
</dbReference>
<dbReference type="PROSITE" id="PS00831">
    <property type="entry name" value="RIBOSOMAL_L27"/>
    <property type="match status" value="1"/>
</dbReference>
<protein>
    <recommendedName>
        <fullName evidence="1">Large ribosomal subunit protein bL27</fullName>
    </recommendedName>
    <alternativeName>
        <fullName evidence="3">50S ribosomal protein L27</fullName>
    </alternativeName>
</protein>
<organism>
    <name type="scientific">Proteus mirabilis (strain HI4320)</name>
    <dbReference type="NCBI Taxonomy" id="529507"/>
    <lineage>
        <taxon>Bacteria</taxon>
        <taxon>Pseudomonadati</taxon>
        <taxon>Pseudomonadota</taxon>
        <taxon>Gammaproteobacteria</taxon>
        <taxon>Enterobacterales</taxon>
        <taxon>Morganellaceae</taxon>
        <taxon>Proteus</taxon>
    </lineage>
</organism>
<accession>B4F2A7</accession>